<gene>
    <name type="primary">BIG2</name>
    <name type="ordered locus">At3g60860</name>
    <name type="ORF">T4C21_270</name>
</gene>
<organism>
    <name type="scientific">Arabidopsis thaliana</name>
    <name type="common">Mouse-ear cress</name>
    <dbReference type="NCBI Taxonomy" id="3702"/>
    <lineage>
        <taxon>Eukaryota</taxon>
        <taxon>Viridiplantae</taxon>
        <taxon>Streptophyta</taxon>
        <taxon>Embryophyta</taxon>
        <taxon>Tracheophyta</taxon>
        <taxon>Spermatophyta</taxon>
        <taxon>Magnoliopsida</taxon>
        <taxon>eudicotyledons</taxon>
        <taxon>Gunneridae</taxon>
        <taxon>Pentapetalae</taxon>
        <taxon>rosids</taxon>
        <taxon>malvids</taxon>
        <taxon>Brassicales</taxon>
        <taxon>Brassicaceae</taxon>
        <taxon>Camelineae</taxon>
        <taxon>Arabidopsis</taxon>
    </lineage>
</organism>
<protein>
    <recommendedName>
        <fullName>Brefeldin A-inhibited guanine nucleotide-exchange protein 2</fullName>
        <shortName>BIG2</shortName>
    </recommendedName>
    <alternativeName>
        <fullName>ARF guanine-nucleotide exchange factor BIG2</fullName>
    </alternativeName>
</protein>
<proteinExistence type="evidence at transcript level"/>
<comment type="function">
    <text evidence="1">Activates the ARF proteins by exchanging bound GDP for free GTP. Plays a role in vesicular protein sorting (By similarity).</text>
</comment>
<comment type="activity regulation">
    <text evidence="1">Inhibited by brefeldin A.</text>
</comment>
<comment type="subunit">
    <text evidence="1">Homodimer.</text>
</comment>
<comment type="subcellular location">
    <subcellularLocation>
        <location evidence="1">Cytoplasm</location>
        <location evidence="1">Cytosol</location>
    </subcellularLocation>
    <subcellularLocation>
        <location evidence="1">Membrane</location>
        <topology evidence="1">Peripheral membrane protein</topology>
        <orientation evidence="1">Cytoplasmic side</orientation>
    </subcellularLocation>
    <text evidence="1">Soluble and partially membrane-bound.</text>
</comment>
<feature type="initiator methionine" description="Removed" evidence="2">
    <location>
        <position position="1"/>
    </location>
</feature>
<feature type="chain" id="PRO_0000420951" description="Brefeldin A-inhibited guanine nucleotide-exchange protein 2">
    <location>
        <begin position="2"/>
        <end position="1793"/>
    </location>
</feature>
<feature type="domain" description="SEC7" evidence="4">
    <location>
        <begin position="610"/>
        <end position="797"/>
    </location>
</feature>
<feature type="region of interest" description="Disordered" evidence="5">
    <location>
        <begin position="45"/>
        <end position="71"/>
    </location>
</feature>
<feature type="region of interest" description="Disordered" evidence="5">
    <location>
        <begin position="266"/>
        <end position="299"/>
    </location>
</feature>
<feature type="region of interest" description="Disordered" evidence="5">
    <location>
        <begin position="579"/>
        <end position="606"/>
    </location>
</feature>
<feature type="region of interest" description="Disordered" evidence="5">
    <location>
        <begin position="1311"/>
        <end position="1333"/>
    </location>
</feature>
<feature type="compositionally biased region" description="Low complexity" evidence="5">
    <location>
        <begin position="55"/>
        <end position="66"/>
    </location>
</feature>
<feature type="compositionally biased region" description="Gly residues" evidence="5">
    <location>
        <begin position="270"/>
        <end position="281"/>
    </location>
</feature>
<feature type="compositionally biased region" description="Polar residues" evidence="5">
    <location>
        <begin position="284"/>
        <end position="294"/>
    </location>
</feature>
<feature type="compositionally biased region" description="Polar residues" evidence="5">
    <location>
        <begin position="594"/>
        <end position="605"/>
    </location>
</feature>
<feature type="compositionally biased region" description="Polar residues" evidence="5">
    <location>
        <begin position="1311"/>
        <end position="1327"/>
    </location>
</feature>
<feature type="active site" evidence="3">
    <location>
        <position position="712"/>
    </location>
</feature>
<feature type="modified residue" description="N-acetylalanine" evidence="2">
    <location>
        <position position="2"/>
    </location>
</feature>
<feature type="modified residue" description="Phosphoserine" evidence="2">
    <location>
        <position position="595"/>
    </location>
</feature>
<evidence type="ECO:0000250" key="1"/>
<evidence type="ECO:0000250" key="2">
    <source>
        <dbReference type="UniProtKB" id="Q9LPC5"/>
    </source>
</evidence>
<evidence type="ECO:0000255" key="3"/>
<evidence type="ECO:0000255" key="4">
    <source>
        <dbReference type="PROSITE-ProRule" id="PRU00189"/>
    </source>
</evidence>
<evidence type="ECO:0000256" key="5">
    <source>
        <dbReference type="SAM" id="MobiDB-lite"/>
    </source>
</evidence>
<accession>Q9LZX8</accession>
<dbReference type="EMBL" id="AL162295">
    <property type="protein sequence ID" value="CAB82690.1"/>
    <property type="molecule type" value="Genomic_DNA"/>
</dbReference>
<dbReference type="EMBL" id="CP002686">
    <property type="protein sequence ID" value="AEE80118.1"/>
    <property type="molecule type" value="Genomic_DNA"/>
</dbReference>
<dbReference type="EMBL" id="BX826000">
    <property type="status" value="NOT_ANNOTATED_CDS"/>
    <property type="molecule type" value="mRNA"/>
</dbReference>
<dbReference type="PIR" id="T47897">
    <property type="entry name" value="T47897"/>
</dbReference>
<dbReference type="RefSeq" id="NP_191645.1">
    <property type="nucleotide sequence ID" value="NM_115950.4"/>
</dbReference>
<dbReference type="SMR" id="Q9LZX8"/>
<dbReference type="BioGRID" id="10571">
    <property type="interactions" value="1"/>
</dbReference>
<dbReference type="FunCoup" id="Q9LZX8">
    <property type="interactions" value="4810"/>
</dbReference>
<dbReference type="STRING" id="3702.Q9LZX8"/>
<dbReference type="GlyGen" id="Q9LZX8">
    <property type="glycosylation" value="2 sites, 1 O-linked glycan (1 site)"/>
</dbReference>
<dbReference type="iPTMnet" id="Q9LZX8"/>
<dbReference type="PaxDb" id="3702-AT3G60860.1"/>
<dbReference type="ProteomicsDB" id="240427"/>
<dbReference type="EnsemblPlants" id="AT3G60860.1">
    <property type="protein sequence ID" value="AT3G60860.1"/>
    <property type="gene ID" value="AT3G60860"/>
</dbReference>
<dbReference type="GeneID" id="825257"/>
<dbReference type="Gramene" id="AT3G60860.1">
    <property type="protein sequence ID" value="AT3G60860.1"/>
    <property type="gene ID" value="AT3G60860"/>
</dbReference>
<dbReference type="KEGG" id="ath:AT3G60860"/>
<dbReference type="Araport" id="AT3G60860"/>
<dbReference type="TAIR" id="AT3G60860">
    <property type="gene designation" value="BIG2"/>
</dbReference>
<dbReference type="eggNOG" id="KOG0929">
    <property type="taxonomic scope" value="Eukaryota"/>
</dbReference>
<dbReference type="HOGENOM" id="CLU_000691_1_1_1"/>
<dbReference type="InParanoid" id="Q9LZX8"/>
<dbReference type="OMA" id="EVMCAYI"/>
<dbReference type="PhylomeDB" id="Q9LZX8"/>
<dbReference type="PRO" id="PR:Q9LZX8"/>
<dbReference type="Proteomes" id="UP000006548">
    <property type="component" value="Chromosome 3"/>
</dbReference>
<dbReference type="ExpressionAtlas" id="Q9LZX8">
    <property type="expression patterns" value="baseline and differential"/>
</dbReference>
<dbReference type="GO" id="GO:0005829">
    <property type="term" value="C:cytosol"/>
    <property type="evidence" value="ECO:0007669"/>
    <property type="project" value="UniProtKB-SubCell"/>
</dbReference>
<dbReference type="GO" id="GO:0016020">
    <property type="term" value="C:membrane"/>
    <property type="evidence" value="ECO:0007669"/>
    <property type="project" value="UniProtKB-SubCell"/>
</dbReference>
<dbReference type="GO" id="GO:0005085">
    <property type="term" value="F:guanyl-nucleotide exchange factor activity"/>
    <property type="evidence" value="ECO:0007669"/>
    <property type="project" value="UniProtKB-KW"/>
</dbReference>
<dbReference type="GO" id="GO:0043001">
    <property type="term" value="P:Golgi to plasma membrane protein transport"/>
    <property type="evidence" value="ECO:0000315"/>
    <property type="project" value="TAIR"/>
</dbReference>
<dbReference type="GO" id="GO:0032012">
    <property type="term" value="P:regulation of ARF protein signal transduction"/>
    <property type="evidence" value="ECO:0007669"/>
    <property type="project" value="InterPro"/>
</dbReference>
<dbReference type="CDD" id="cd00171">
    <property type="entry name" value="Sec7"/>
    <property type="match status" value="1"/>
</dbReference>
<dbReference type="FunFam" id="1.10.1000.11:FF:000005">
    <property type="entry name" value="Brefeldin A-inhibited guanine nucleotide-exchange 1"/>
    <property type="match status" value="1"/>
</dbReference>
<dbReference type="FunFam" id="1.10.220.20:FF:000002">
    <property type="entry name" value="Brefeldin A-inhibited guanine nucleotide-exchange protein 1"/>
    <property type="match status" value="1"/>
</dbReference>
<dbReference type="Gene3D" id="1.10.220.20">
    <property type="match status" value="1"/>
</dbReference>
<dbReference type="Gene3D" id="1.10.1000.11">
    <property type="entry name" value="Arf Nucleotide-binding Site Opener,domain 2"/>
    <property type="match status" value="1"/>
</dbReference>
<dbReference type="InterPro" id="IPR016024">
    <property type="entry name" value="ARM-type_fold"/>
</dbReference>
<dbReference type="InterPro" id="IPR032629">
    <property type="entry name" value="DCB_dom"/>
</dbReference>
<dbReference type="InterPro" id="IPR015403">
    <property type="entry name" value="Mon2/Sec7/BIG1-like_HDS"/>
</dbReference>
<dbReference type="InterPro" id="IPR032691">
    <property type="entry name" value="Mon2/Sec7/BIG1-like_HUS"/>
</dbReference>
<dbReference type="InterPro" id="IPR032817">
    <property type="entry name" value="Mon2_C"/>
</dbReference>
<dbReference type="InterPro" id="IPR046455">
    <property type="entry name" value="Sec7/BIG1-like_C"/>
</dbReference>
<dbReference type="InterPro" id="IPR023394">
    <property type="entry name" value="Sec7_C_sf"/>
</dbReference>
<dbReference type="InterPro" id="IPR000904">
    <property type="entry name" value="Sec7_dom"/>
</dbReference>
<dbReference type="InterPro" id="IPR035999">
    <property type="entry name" value="Sec7_dom_sf"/>
</dbReference>
<dbReference type="PANTHER" id="PTHR10663:SF379">
    <property type="entry name" value="BREFELDIN A-INHIBITED GUANINE NUCLEOTIDE-EXCHANGE PROTEIN 2"/>
    <property type="match status" value="1"/>
</dbReference>
<dbReference type="PANTHER" id="PTHR10663">
    <property type="entry name" value="GUANYL-NUCLEOTIDE EXCHANGE FACTOR"/>
    <property type="match status" value="1"/>
</dbReference>
<dbReference type="Pfam" id="PF20252">
    <property type="entry name" value="BIG2_C"/>
    <property type="match status" value="1"/>
</dbReference>
<dbReference type="Pfam" id="PF16213">
    <property type="entry name" value="DCB"/>
    <property type="match status" value="1"/>
</dbReference>
<dbReference type="Pfam" id="PF16206">
    <property type="entry name" value="Mon2_C"/>
    <property type="match status" value="1"/>
</dbReference>
<dbReference type="Pfam" id="PF01369">
    <property type="entry name" value="Sec7"/>
    <property type="match status" value="1"/>
</dbReference>
<dbReference type="Pfam" id="PF09324">
    <property type="entry name" value="Sec7-like_HDS"/>
    <property type="match status" value="1"/>
</dbReference>
<dbReference type="Pfam" id="PF12783">
    <property type="entry name" value="Sec7-like_HUS"/>
    <property type="match status" value="1"/>
</dbReference>
<dbReference type="SMART" id="SM00222">
    <property type="entry name" value="Sec7"/>
    <property type="match status" value="1"/>
</dbReference>
<dbReference type="SUPFAM" id="SSF48371">
    <property type="entry name" value="ARM repeat"/>
    <property type="match status" value="2"/>
</dbReference>
<dbReference type="SUPFAM" id="SSF48425">
    <property type="entry name" value="Sec7 domain"/>
    <property type="match status" value="1"/>
</dbReference>
<dbReference type="PROSITE" id="PS50190">
    <property type="entry name" value="SEC7"/>
    <property type="match status" value="1"/>
</dbReference>
<keyword id="KW-0007">Acetylation</keyword>
<keyword id="KW-0963">Cytoplasm</keyword>
<keyword id="KW-0344">Guanine-nucleotide releasing factor</keyword>
<keyword id="KW-0472">Membrane</keyword>
<keyword id="KW-0597">Phosphoprotein</keyword>
<keyword id="KW-0653">Protein transport</keyword>
<keyword id="KW-1185">Reference proteome</keyword>
<keyword id="KW-0813">Transport</keyword>
<reference key="1">
    <citation type="journal article" date="2000" name="Nature">
        <title>Sequence and analysis of chromosome 3 of the plant Arabidopsis thaliana.</title>
        <authorList>
            <person name="Salanoubat M."/>
            <person name="Lemcke K."/>
            <person name="Rieger M."/>
            <person name="Ansorge W."/>
            <person name="Unseld M."/>
            <person name="Fartmann B."/>
            <person name="Valle G."/>
            <person name="Bloecker H."/>
            <person name="Perez-Alonso M."/>
            <person name="Obermaier B."/>
            <person name="Delseny M."/>
            <person name="Boutry M."/>
            <person name="Grivell L.A."/>
            <person name="Mache R."/>
            <person name="Puigdomenech P."/>
            <person name="De Simone V."/>
            <person name="Choisne N."/>
            <person name="Artiguenave F."/>
            <person name="Robert C."/>
            <person name="Brottier P."/>
            <person name="Wincker P."/>
            <person name="Cattolico L."/>
            <person name="Weissenbach J."/>
            <person name="Saurin W."/>
            <person name="Quetier F."/>
            <person name="Schaefer M."/>
            <person name="Mueller-Auer S."/>
            <person name="Gabel C."/>
            <person name="Fuchs M."/>
            <person name="Benes V."/>
            <person name="Wurmbach E."/>
            <person name="Drzonek H."/>
            <person name="Erfle H."/>
            <person name="Jordan N."/>
            <person name="Bangert S."/>
            <person name="Wiedelmann R."/>
            <person name="Kranz H."/>
            <person name="Voss H."/>
            <person name="Holland R."/>
            <person name="Brandt P."/>
            <person name="Nyakatura G."/>
            <person name="Vezzi A."/>
            <person name="D'Angelo M."/>
            <person name="Pallavicini A."/>
            <person name="Toppo S."/>
            <person name="Simionati B."/>
            <person name="Conrad A."/>
            <person name="Hornischer K."/>
            <person name="Kauer G."/>
            <person name="Loehnert T.-H."/>
            <person name="Nordsiek G."/>
            <person name="Reichelt J."/>
            <person name="Scharfe M."/>
            <person name="Schoen O."/>
            <person name="Bargues M."/>
            <person name="Terol J."/>
            <person name="Climent J."/>
            <person name="Navarro P."/>
            <person name="Collado C."/>
            <person name="Perez-Perez A."/>
            <person name="Ottenwaelder B."/>
            <person name="Duchemin D."/>
            <person name="Cooke R."/>
            <person name="Laudie M."/>
            <person name="Berger-Llauro C."/>
            <person name="Purnelle B."/>
            <person name="Masuy D."/>
            <person name="de Haan M."/>
            <person name="Maarse A.C."/>
            <person name="Alcaraz J.-P."/>
            <person name="Cottet A."/>
            <person name="Casacuberta E."/>
            <person name="Monfort A."/>
            <person name="Argiriou A."/>
            <person name="Flores M."/>
            <person name="Liguori R."/>
            <person name="Vitale D."/>
            <person name="Mannhaupt G."/>
            <person name="Haase D."/>
            <person name="Schoof H."/>
            <person name="Rudd S."/>
            <person name="Zaccaria P."/>
            <person name="Mewes H.-W."/>
            <person name="Mayer K.F.X."/>
            <person name="Kaul S."/>
            <person name="Town C.D."/>
            <person name="Koo H.L."/>
            <person name="Tallon L.J."/>
            <person name="Jenkins J."/>
            <person name="Rooney T."/>
            <person name="Rizzo M."/>
            <person name="Walts A."/>
            <person name="Utterback T."/>
            <person name="Fujii C.Y."/>
            <person name="Shea T.P."/>
            <person name="Creasy T.H."/>
            <person name="Haas B."/>
            <person name="Maiti R."/>
            <person name="Wu D."/>
            <person name="Peterson J."/>
            <person name="Van Aken S."/>
            <person name="Pai G."/>
            <person name="Militscher J."/>
            <person name="Sellers P."/>
            <person name="Gill J.E."/>
            <person name="Feldblyum T.V."/>
            <person name="Preuss D."/>
            <person name="Lin X."/>
            <person name="Nierman W.C."/>
            <person name="Salzberg S.L."/>
            <person name="White O."/>
            <person name="Venter J.C."/>
            <person name="Fraser C.M."/>
            <person name="Kaneko T."/>
            <person name="Nakamura Y."/>
            <person name="Sato S."/>
            <person name="Kato T."/>
            <person name="Asamizu E."/>
            <person name="Sasamoto S."/>
            <person name="Kimura T."/>
            <person name="Idesawa K."/>
            <person name="Kawashima K."/>
            <person name="Kishida Y."/>
            <person name="Kiyokawa C."/>
            <person name="Kohara M."/>
            <person name="Matsumoto M."/>
            <person name="Matsuno A."/>
            <person name="Muraki A."/>
            <person name="Nakayama S."/>
            <person name="Nakazaki N."/>
            <person name="Shinpo S."/>
            <person name="Takeuchi C."/>
            <person name="Wada T."/>
            <person name="Watanabe A."/>
            <person name="Yamada M."/>
            <person name="Yasuda M."/>
            <person name="Tabata S."/>
        </authorList>
    </citation>
    <scope>NUCLEOTIDE SEQUENCE [LARGE SCALE GENOMIC DNA]</scope>
    <source>
        <strain>cv. Columbia</strain>
    </source>
</reference>
<reference key="2">
    <citation type="journal article" date="2017" name="Plant J.">
        <title>Araport11: a complete reannotation of the Arabidopsis thaliana reference genome.</title>
        <authorList>
            <person name="Cheng C.Y."/>
            <person name="Krishnakumar V."/>
            <person name="Chan A.P."/>
            <person name="Thibaud-Nissen F."/>
            <person name="Schobel S."/>
            <person name="Town C.D."/>
        </authorList>
    </citation>
    <scope>GENOME REANNOTATION</scope>
    <source>
        <strain>cv. Columbia</strain>
    </source>
</reference>
<reference key="3">
    <citation type="journal article" date="2004" name="Genome Res.">
        <title>Whole genome sequence comparisons and 'full-length' cDNA sequences: a combined approach to evaluate and improve Arabidopsis genome annotation.</title>
        <authorList>
            <person name="Castelli V."/>
            <person name="Aury J.-M."/>
            <person name="Jaillon O."/>
            <person name="Wincker P."/>
            <person name="Clepet C."/>
            <person name="Menard M."/>
            <person name="Cruaud C."/>
            <person name="Quetier F."/>
            <person name="Scarpelli C."/>
            <person name="Schaechter V."/>
            <person name="Temple G."/>
            <person name="Caboche M."/>
            <person name="Weissenbach J."/>
            <person name="Salanoubat M."/>
        </authorList>
    </citation>
    <scope>NUCLEOTIDE SEQUENCE [LARGE SCALE MRNA] OF 1605-1793</scope>
    <source>
        <strain>cv. Columbia</strain>
    </source>
</reference>
<reference key="4">
    <citation type="journal article" date="2003" name="Cell">
        <title>The Arabidopsis GNOM ARF-GEF mediates endosomal recycling, auxin transport, and auxin-dependent plant growth.</title>
        <authorList>
            <person name="Geldner N."/>
            <person name="Anders N."/>
            <person name="Wolters H."/>
            <person name="Keicher J."/>
            <person name="Kornberger W."/>
            <person name="Muller P."/>
            <person name="Delbarre A."/>
            <person name="Ueda T."/>
            <person name="Nakano A."/>
            <person name="Juergens G."/>
        </authorList>
    </citation>
    <scope>GENE FAMILY</scope>
</reference>
<reference key="5">
    <citation type="journal article" date="2004" name="Mol. Biol. Cell">
        <title>Phylogenetic analysis of Sec7-domain-containing Arf nucleotide exchangers.</title>
        <authorList>
            <person name="Cox R."/>
            <person name="Mason-Gamer R.J."/>
            <person name="Jackson C.L."/>
            <person name="Segev N."/>
        </authorList>
    </citation>
    <scope>GENE FAMILY</scope>
    <scope>NOMENCLATURE</scope>
</reference>
<reference key="6">
    <citation type="journal article" date="2007" name="Nature">
        <title>Functional diversification of closely related ARF-GEFs in protein secretion and recycling.</title>
        <authorList>
            <person name="Richter S."/>
            <person name="Geldner N."/>
            <person name="Schrader J."/>
            <person name="Wolters H."/>
            <person name="Stierhof Y.D."/>
            <person name="Rios G."/>
            <person name="Koncz C."/>
            <person name="Robinson D.G."/>
            <person name="Juergens G."/>
        </authorList>
    </citation>
    <scope>GENE FAMILY</scope>
</reference>
<name>BIG2_ARATH</name>
<sequence>MASSEADSRLSRVVTPALEKIVKNASWRKHSKLANECKAVIERLNSLQKSPPPSSSAATDSESESSVPGPLNDGGSIEYSLADSELIFSPLINACGTGLAKIIEPAIDCIQKLIAHGYIRGESDPSGGAESLLLFKLIDSVCKCHDLGDESIELPVLKTLLSAINSISLRIHGKCLLLVVRTCYDIYLGSKNVVNQTTAKASLIQILVIVFRRMEADSSTVPIQPIVVAELMEPLEKSDADGTMTQFVQGFITKIMQDIDGVLNPTMSGSGSGSGSGGQDGAYGTTTVETTNPTDLLDSTDKDMLDAKYWEISMYKSALEGRKGELTDGDAERDDDLEVQIENKLRRDACLVFRALCKLSMKAPPKESSADPQSMRGKILALELLKILLENAGAVFRTSEKFSADIKQFLCLSLLKNSASTLMIIFQLSCSIFISLVARFRAGLKAEIGVFFPMIVLRVVENVAQPNFQQKMIVLRFLDKLCLDSQILVDIFLNYDCDVNSSNIFERMVNGLLKTAQGVPPGTATTLMPPQEAAMKLEAMKCLVAILKSMGDWLNKQLRLPVSNSLNKSDVIEIDLGPGSPQLANGNADESADGSDTYSESSGGTSDALAIEQRRAYKLELQEGISLFNRKPTKGIEFLINAGKVGESPEEIAGFLKDASGLNKTLIGDYLGEREDLALKVMHAYVDSFDFRGMEFDEAIRTFLEGFRLPGEAQKIDRIMEKFAERYCKCNPKVFTSADSAYVLAYSVIMLNTDAHNPMVKNKMSADDFIRNNRGIDDGKDLPADYMRSLYERITKHEIKMKEDDLRLQQKQYANSNRMLGLDGILNIVIRKQWGDSYAETSDDLMKHMQEQFKEKARKSESTYYAATDVVILRFMIEACWAPMLAAFSVPLDQSDDLIVINICLEGFHHAIHATSLMSMKTHRDAFVTSLAKFTSLHSPADIKQRNIEAIKAILRLADEEGNYLQDAWEHILTCVSRFEQLHLLGEGAPPDATFFASKQNESEKSKQPKQYILPVLKRKGPGKSQYAATGVLRGSYDSMSLGGKGSKNVRQEQMSSIVSNLNLLEQVGEMNQVFSQSQKLNSEAIIDFVKALCKVSMDELRSPSNPRVFSLTKIVEIAHYNMNRIRLVWSSIWQVLSGFFVTIGCSENLSIAIFAMDSLRQLSMKFLEREELANYNFQNEFMTPFVIVMRRSNDVEIRELIIRCVSQMVLSRVNNVKSGWKSMFMVFTTAAYDDHKNIVFLSFEIIEKIIREYFPYITETETTTFTDCVNCLVAFTNNRFSKDISLSSIAFLRYCATKLAEGDLNSPSTNKYKGTSGKIPQSSLHSGKSGKQENGEIVNNNHLYFWFPLLSGLSELSFDPRPEIRKSALQIMFDTLRNHGHLFSLPLWEKVFESVLFPIFDYVRHSIDPSGEDESADQGSSGGEVDELDHDAWLYETCTLALQLVVDLFVKFYTTVNPLLEKVLMLLVSFIKRPHQSLAGIGIAAFVRLMSDADGLFSEEKWLEVVSALKEAAKTTCPDFSYFLSEEYVARSQRSALNIQNSNAESAAPTATDGNEESQRTATHLYAAISDAKCRAAVQLLLIQAVMEIYNMYRPQLSAKNTLVLVDALHGVALHAHGINSNTILRSRLQELGPMTQMQDPPLLRLENESYQICLTFLQNLVADKTKKEEEEEEEEIESLLVNICQEVLNFYIETSSSAKKLQSESSRASEYRWRIPLGSGKRRELSARAPLIVATLQAMCTLDEASFEKNLKCLFPLLANLISCEHGSNEVQTALADMLGLSVGPVLLQWC</sequence>